<feature type="chain" id="PRO_0000383440" description="L-lactate dehydrogenase">
    <location>
        <begin position="1"/>
        <end position="396"/>
    </location>
</feature>
<feature type="domain" description="FMN hydroxy acid dehydrogenase" evidence="1">
    <location>
        <begin position="1"/>
        <end position="380"/>
    </location>
</feature>
<feature type="active site" description="Proton acceptor" evidence="1">
    <location>
        <position position="275"/>
    </location>
</feature>
<feature type="binding site" evidence="1">
    <location>
        <position position="24"/>
    </location>
    <ligand>
        <name>substrate</name>
    </ligand>
</feature>
<feature type="binding site" evidence="1">
    <location>
        <position position="106"/>
    </location>
    <ligand>
        <name>FMN</name>
        <dbReference type="ChEBI" id="CHEBI:58210"/>
    </ligand>
</feature>
<feature type="binding site" evidence="1">
    <location>
        <position position="127"/>
    </location>
    <ligand>
        <name>FMN</name>
        <dbReference type="ChEBI" id="CHEBI:58210"/>
    </ligand>
</feature>
<feature type="binding site" evidence="1">
    <location>
        <position position="129"/>
    </location>
    <ligand>
        <name>substrate</name>
    </ligand>
</feature>
<feature type="binding site" evidence="1">
    <location>
        <position position="155"/>
    </location>
    <ligand>
        <name>FMN</name>
        <dbReference type="ChEBI" id="CHEBI:58210"/>
    </ligand>
</feature>
<feature type="binding site" evidence="1">
    <location>
        <position position="164"/>
    </location>
    <ligand>
        <name>substrate</name>
    </ligand>
</feature>
<feature type="binding site" evidence="1">
    <location>
        <position position="251"/>
    </location>
    <ligand>
        <name>FMN</name>
        <dbReference type="ChEBI" id="CHEBI:58210"/>
    </ligand>
</feature>
<feature type="binding site" evidence="1">
    <location>
        <position position="278"/>
    </location>
    <ligand>
        <name>substrate</name>
    </ligand>
</feature>
<feature type="binding site" evidence="1">
    <location>
        <begin position="306"/>
        <end position="330"/>
    </location>
    <ligand>
        <name>FMN</name>
        <dbReference type="ChEBI" id="CHEBI:58210"/>
    </ligand>
</feature>
<evidence type="ECO:0000255" key="1">
    <source>
        <dbReference type="HAMAP-Rule" id="MF_01559"/>
    </source>
</evidence>
<keyword id="KW-0997">Cell inner membrane</keyword>
<keyword id="KW-1003">Cell membrane</keyword>
<keyword id="KW-0285">Flavoprotein</keyword>
<keyword id="KW-0288">FMN</keyword>
<keyword id="KW-0472">Membrane</keyword>
<keyword id="KW-0560">Oxidoreductase</keyword>
<reference key="1">
    <citation type="journal article" date="2008" name="Genome Res.">
        <title>Comparative genome analysis of Salmonella enteritidis PT4 and Salmonella gallinarum 287/91 provides insights into evolutionary and host adaptation pathways.</title>
        <authorList>
            <person name="Thomson N.R."/>
            <person name="Clayton D.J."/>
            <person name="Windhorst D."/>
            <person name="Vernikos G."/>
            <person name="Davidson S."/>
            <person name="Churcher C."/>
            <person name="Quail M.A."/>
            <person name="Stevens M."/>
            <person name="Jones M.A."/>
            <person name="Watson M."/>
            <person name="Barron A."/>
            <person name="Layton A."/>
            <person name="Pickard D."/>
            <person name="Kingsley R.A."/>
            <person name="Bignell A."/>
            <person name="Clark L."/>
            <person name="Harris B."/>
            <person name="Ormond D."/>
            <person name="Abdellah Z."/>
            <person name="Brooks K."/>
            <person name="Cherevach I."/>
            <person name="Chillingworth T."/>
            <person name="Woodward J."/>
            <person name="Norberczak H."/>
            <person name="Lord A."/>
            <person name="Arrowsmith C."/>
            <person name="Jagels K."/>
            <person name="Moule S."/>
            <person name="Mungall K."/>
            <person name="Saunders M."/>
            <person name="Whitehead S."/>
            <person name="Chabalgoity J.A."/>
            <person name="Maskell D."/>
            <person name="Humphreys T."/>
            <person name="Roberts M."/>
            <person name="Barrow P.A."/>
            <person name="Dougan G."/>
            <person name="Parkhill J."/>
        </authorList>
    </citation>
    <scope>NUCLEOTIDE SEQUENCE [LARGE SCALE GENOMIC DNA]</scope>
    <source>
        <strain>P125109</strain>
    </source>
</reference>
<comment type="function">
    <text evidence="1">Catalyzes the conversion of L-lactate to pyruvate. Is coupled to the respiratory chain.</text>
</comment>
<comment type="catalytic activity">
    <reaction evidence="1">
        <text>(S)-lactate + A = pyruvate + AH2</text>
        <dbReference type="Rhea" id="RHEA:45816"/>
        <dbReference type="ChEBI" id="CHEBI:13193"/>
        <dbReference type="ChEBI" id="CHEBI:15361"/>
        <dbReference type="ChEBI" id="CHEBI:16651"/>
        <dbReference type="ChEBI" id="CHEBI:17499"/>
    </reaction>
</comment>
<comment type="cofactor">
    <cofactor evidence="1">
        <name>FMN</name>
        <dbReference type="ChEBI" id="CHEBI:58210"/>
    </cofactor>
</comment>
<comment type="subcellular location">
    <subcellularLocation>
        <location evidence="1">Cell inner membrane</location>
        <topology evidence="1">Peripheral membrane protein</topology>
    </subcellularLocation>
</comment>
<comment type="similarity">
    <text evidence="1">Belongs to the FMN-dependent alpha-hydroxy acid dehydrogenase family.</text>
</comment>
<accession>B5R5C7</accession>
<protein>
    <recommendedName>
        <fullName evidence="1">L-lactate dehydrogenase</fullName>
        <ecNumber evidence="1">1.1.-.-</ecNumber>
    </recommendedName>
</protein>
<proteinExistence type="inferred from homology"/>
<sequence>MIISAASDYRAAAQRTLPPFLFHYIDGGAYAEYTLRRNVEDLSQVALRQRVLKNMSDLSLETTLFNETLSMPVALAPVGLCGMYARRGEVQAAAAADAKGIPFTLSTVSVCPIEEVAPTIKRPMWFQLYVLRDRGFMRNALERAKAAGCSTLVFTVDMPTPGARYRDAHSGMSGPNAAMRRYWQAVMHPKWAWDVGLNGRPHDLGNISAYLGKPTGLEDYIGWLANNFDPSISWKDLEWIREFWDGPMVIKGILDPEDARDAVRFGADGIVVSNHGGRQLDGVLSSARALPAIADAVKGDIAILADSGIRNGLDVVRMIALGADTVLLGRAYLYALATAGKAGVANLLDLIEKEMKVAMTLTGAKTISEISGDSLVQELGKSLPAALAPMSKGDTA</sequence>
<dbReference type="EC" id="1.1.-.-" evidence="1"/>
<dbReference type="EMBL" id="AM933172">
    <property type="protein sequence ID" value="CAR35095.1"/>
    <property type="molecule type" value="Genomic_DNA"/>
</dbReference>
<dbReference type="RefSeq" id="WP_000586995.1">
    <property type="nucleotide sequence ID" value="NC_011294.1"/>
</dbReference>
<dbReference type="SMR" id="B5R5C7"/>
<dbReference type="KEGG" id="set:SEN3516"/>
<dbReference type="HOGENOM" id="CLU_020639_0_0_6"/>
<dbReference type="Proteomes" id="UP000000613">
    <property type="component" value="Chromosome"/>
</dbReference>
<dbReference type="GO" id="GO:0005886">
    <property type="term" value="C:plasma membrane"/>
    <property type="evidence" value="ECO:0007669"/>
    <property type="project" value="UniProtKB-SubCell"/>
</dbReference>
<dbReference type="GO" id="GO:0010181">
    <property type="term" value="F:FMN binding"/>
    <property type="evidence" value="ECO:0007669"/>
    <property type="project" value="InterPro"/>
</dbReference>
<dbReference type="GO" id="GO:0004459">
    <property type="term" value="F:L-lactate dehydrogenase activity"/>
    <property type="evidence" value="ECO:0007669"/>
    <property type="project" value="UniProtKB-UniRule"/>
</dbReference>
<dbReference type="GO" id="GO:0009060">
    <property type="term" value="P:aerobic respiration"/>
    <property type="evidence" value="ECO:0007669"/>
    <property type="project" value="TreeGrafter"/>
</dbReference>
<dbReference type="GO" id="GO:0006089">
    <property type="term" value="P:lactate metabolic process"/>
    <property type="evidence" value="ECO:0007669"/>
    <property type="project" value="UniProtKB-UniRule"/>
</dbReference>
<dbReference type="CDD" id="cd02809">
    <property type="entry name" value="alpha_hydroxyacid_oxid_FMN"/>
    <property type="match status" value="1"/>
</dbReference>
<dbReference type="FunFam" id="3.20.20.70:FF:000029">
    <property type="entry name" value="L-lactate dehydrogenase"/>
    <property type="match status" value="1"/>
</dbReference>
<dbReference type="Gene3D" id="3.20.20.70">
    <property type="entry name" value="Aldolase class I"/>
    <property type="match status" value="1"/>
</dbReference>
<dbReference type="HAMAP" id="MF_01559">
    <property type="entry name" value="L_lact_dehydr"/>
    <property type="match status" value="1"/>
</dbReference>
<dbReference type="InterPro" id="IPR013785">
    <property type="entry name" value="Aldolase_TIM"/>
</dbReference>
<dbReference type="InterPro" id="IPR012133">
    <property type="entry name" value="Alpha-hydoxy_acid_DH_FMN"/>
</dbReference>
<dbReference type="InterPro" id="IPR000262">
    <property type="entry name" value="FMN-dep_DH"/>
</dbReference>
<dbReference type="InterPro" id="IPR037396">
    <property type="entry name" value="FMN_HAD"/>
</dbReference>
<dbReference type="InterPro" id="IPR008259">
    <property type="entry name" value="FMN_hydac_DH_AS"/>
</dbReference>
<dbReference type="InterPro" id="IPR020920">
    <property type="entry name" value="LldD"/>
</dbReference>
<dbReference type="NCBIfam" id="NF033901">
    <property type="entry name" value="L_lactate_LldD"/>
    <property type="match status" value="1"/>
</dbReference>
<dbReference type="NCBIfam" id="NF008398">
    <property type="entry name" value="PRK11197.1"/>
    <property type="match status" value="1"/>
</dbReference>
<dbReference type="PANTHER" id="PTHR10578:SF85">
    <property type="entry name" value="L-LACTATE DEHYDROGENASE"/>
    <property type="match status" value="1"/>
</dbReference>
<dbReference type="PANTHER" id="PTHR10578">
    <property type="entry name" value="S -2-HYDROXY-ACID OXIDASE-RELATED"/>
    <property type="match status" value="1"/>
</dbReference>
<dbReference type="Pfam" id="PF01070">
    <property type="entry name" value="FMN_dh"/>
    <property type="match status" value="1"/>
</dbReference>
<dbReference type="PIRSF" id="PIRSF000138">
    <property type="entry name" value="Al-hdrx_acd_dh"/>
    <property type="match status" value="1"/>
</dbReference>
<dbReference type="SUPFAM" id="SSF51395">
    <property type="entry name" value="FMN-linked oxidoreductases"/>
    <property type="match status" value="1"/>
</dbReference>
<dbReference type="PROSITE" id="PS00557">
    <property type="entry name" value="FMN_HYDROXY_ACID_DH_1"/>
    <property type="match status" value="1"/>
</dbReference>
<dbReference type="PROSITE" id="PS51349">
    <property type="entry name" value="FMN_HYDROXY_ACID_DH_2"/>
    <property type="match status" value="1"/>
</dbReference>
<organism>
    <name type="scientific">Salmonella enteritidis PT4 (strain P125109)</name>
    <dbReference type="NCBI Taxonomy" id="550537"/>
    <lineage>
        <taxon>Bacteria</taxon>
        <taxon>Pseudomonadati</taxon>
        <taxon>Pseudomonadota</taxon>
        <taxon>Gammaproteobacteria</taxon>
        <taxon>Enterobacterales</taxon>
        <taxon>Enterobacteriaceae</taxon>
        <taxon>Salmonella</taxon>
    </lineage>
</organism>
<gene>
    <name evidence="1" type="primary">lldD</name>
    <name type="ordered locus">SEN3516</name>
</gene>
<name>LLDD_SALEP</name>